<keyword id="KW-0004">4Fe-4S</keyword>
<keyword id="KW-0963">Cytoplasm</keyword>
<keyword id="KW-0408">Iron</keyword>
<keyword id="KW-0411">Iron-sulfur</keyword>
<keyword id="KW-0479">Metal-binding</keyword>
<keyword id="KW-0949">S-adenosyl-L-methionine</keyword>
<keyword id="KW-0808">Transferase</keyword>
<protein>
    <recommendedName>
        <fullName evidence="1">Lipoyl synthase 1</fullName>
        <ecNumber evidence="1">2.8.1.8</ecNumber>
    </recommendedName>
    <alternativeName>
        <fullName evidence="1">Lip-syn 1</fullName>
        <shortName evidence="1">LS 1</shortName>
    </alternativeName>
    <alternativeName>
        <fullName evidence="1">Lipoate synthase 1</fullName>
    </alternativeName>
    <alternativeName>
        <fullName evidence="1">Lipoic acid synthase 1</fullName>
    </alternativeName>
    <alternativeName>
        <fullName evidence="1">Sulfur insertion protein LipA 1</fullName>
    </alternativeName>
</protein>
<gene>
    <name evidence="1" type="primary">lipA1</name>
    <name type="synonym">lipA</name>
    <name type="ordered locus">SYNW2130</name>
</gene>
<name>LIPA1_PARMW</name>
<dbReference type="EC" id="2.8.1.8" evidence="1"/>
<dbReference type="EMBL" id="BX569694">
    <property type="protein sequence ID" value="CAE08645.1"/>
    <property type="molecule type" value="Genomic_DNA"/>
</dbReference>
<dbReference type="RefSeq" id="WP_011128986.1">
    <property type="nucleotide sequence ID" value="NC_005070.1"/>
</dbReference>
<dbReference type="SMR" id="Q7U4D9"/>
<dbReference type="STRING" id="84588.SYNW2130"/>
<dbReference type="KEGG" id="syw:SYNW2130"/>
<dbReference type="eggNOG" id="COG0320">
    <property type="taxonomic scope" value="Bacteria"/>
</dbReference>
<dbReference type="HOGENOM" id="CLU_033144_2_1_3"/>
<dbReference type="UniPathway" id="UPA00538">
    <property type="reaction ID" value="UER00593"/>
</dbReference>
<dbReference type="Proteomes" id="UP000001422">
    <property type="component" value="Chromosome"/>
</dbReference>
<dbReference type="GO" id="GO:0005737">
    <property type="term" value="C:cytoplasm"/>
    <property type="evidence" value="ECO:0007669"/>
    <property type="project" value="UniProtKB-SubCell"/>
</dbReference>
<dbReference type="GO" id="GO:0051539">
    <property type="term" value="F:4 iron, 4 sulfur cluster binding"/>
    <property type="evidence" value="ECO:0007669"/>
    <property type="project" value="UniProtKB-UniRule"/>
</dbReference>
<dbReference type="GO" id="GO:0016992">
    <property type="term" value="F:lipoate synthase activity"/>
    <property type="evidence" value="ECO:0007669"/>
    <property type="project" value="UniProtKB-UniRule"/>
</dbReference>
<dbReference type="GO" id="GO:0046872">
    <property type="term" value="F:metal ion binding"/>
    <property type="evidence" value="ECO:0007669"/>
    <property type="project" value="UniProtKB-KW"/>
</dbReference>
<dbReference type="CDD" id="cd01335">
    <property type="entry name" value="Radical_SAM"/>
    <property type="match status" value="1"/>
</dbReference>
<dbReference type="Gene3D" id="3.20.20.70">
    <property type="entry name" value="Aldolase class I"/>
    <property type="match status" value="1"/>
</dbReference>
<dbReference type="HAMAP" id="MF_00206">
    <property type="entry name" value="Lipoyl_synth"/>
    <property type="match status" value="1"/>
</dbReference>
<dbReference type="InterPro" id="IPR013785">
    <property type="entry name" value="Aldolase_TIM"/>
</dbReference>
<dbReference type="InterPro" id="IPR006638">
    <property type="entry name" value="Elp3/MiaA/NifB-like_rSAM"/>
</dbReference>
<dbReference type="InterPro" id="IPR003698">
    <property type="entry name" value="Lipoyl_synth"/>
</dbReference>
<dbReference type="InterPro" id="IPR007197">
    <property type="entry name" value="rSAM"/>
</dbReference>
<dbReference type="NCBIfam" id="TIGR00510">
    <property type="entry name" value="lipA"/>
    <property type="match status" value="1"/>
</dbReference>
<dbReference type="NCBIfam" id="NF004019">
    <property type="entry name" value="PRK05481.1"/>
    <property type="match status" value="1"/>
</dbReference>
<dbReference type="NCBIfam" id="NF009544">
    <property type="entry name" value="PRK12928.1"/>
    <property type="match status" value="1"/>
</dbReference>
<dbReference type="PANTHER" id="PTHR10949">
    <property type="entry name" value="LIPOYL SYNTHASE"/>
    <property type="match status" value="1"/>
</dbReference>
<dbReference type="PANTHER" id="PTHR10949:SF0">
    <property type="entry name" value="LIPOYL SYNTHASE, MITOCHONDRIAL"/>
    <property type="match status" value="1"/>
</dbReference>
<dbReference type="Pfam" id="PF04055">
    <property type="entry name" value="Radical_SAM"/>
    <property type="match status" value="1"/>
</dbReference>
<dbReference type="PIRSF" id="PIRSF005963">
    <property type="entry name" value="Lipoyl_synth"/>
    <property type="match status" value="1"/>
</dbReference>
<dbReference type="SFLD" id="SFLDF00271">
    <property type="entry name" value="lipoyl_synthase"/>
    <property type="match status" value="1"/>
</dbReference>
<dbReference type="SFLD" id="SFLDS00029">
    <property type="entry name" value="Radical_SAM"/>
    <property type="match status" value="1"/>
</dbReference>
<dbReference type="SMART" id="SM00729">
    <property type="entry name" value="Elp3"/>
    <property type="match status" value="1"/>
</dbReference>
<dbReference type="SUPFAM" id="SSF102114">
    <property type="entry name" value="Radical SAM enzymes"/>
    <property type="match status" value="1"/>
</dbReference>
<dbReference type="PROSITE" id="PS51918">
    <property type="entry name" value="RADICAL_SAM"/>
    <property type="match status" value="1"/>
</dbReference>
<accession>Q7U4D9</accession>
<reference key="1">
    <citation type="journal article" date="2003" name="Nature">
        <title>The genome of a motile marine Synechococcus.</title>
        <authorList>
            <person name="Palenik B."/>
            <person name="Brahamsha B."/>
            <person name="Larimer F.W."/>
            <person name="Land M.L."/>
            <person name="Hauser L."/>
            <person name="Chain P."/>
            <person name="Lamerdin J.E."/>
            <person name="Regala W."/>
            <person name="Allen E.E."/>
            <person name="McCarren J."/>
            <person name="Paulsen I.T."/>
            <person name="Dufresne A."/>
            <person name="Partensky F."/>
            <person name="Webb E.A."/>
            <person name="Waterbury J."/>
        </authorList>
    </citation>
    <scope>NUCLEOTIDE SEQUENCE [LARGE SCALE GENOMIC DNA]</scope>
    <source>
        <strain>WH8102</strain>
    </source>
</reference>
<evidence type="ECO:0000255" key="1">
    <source>
        <dbReference type="HAMAP-Rule" id="MF_00206"/>
    </source>
</evidence>
<evidence type="ECO:0000255" key="2">
    <source>
        <dbReference type="PROSITE-ProRule" id="PRU01266"/>
    </source>
</evidence>
<comment type="function">
    <text evidence="1">Catalyzes the radical-mediated insertion of two sulfur atoms into the C-6 and C-8 positions of the octanoyl moiety bound to the lipoyl domains of lipoate-dependent enzymes, thereby converting the octanoylated domains into lipoylated derivatives.</text>
</comment>
<comment type="catalytic activity">
    <reaction evidence="1">
        <text>[[Fe-S] cluster scaffold protein carrying a second [4Fe-4S](2+) cluster] + N(6)-octanoyl-L-lysyl-[protein] + 2 oxidized [2Fe-2S]-[ferredoxin] + 2 S-adenosyl-L-methionine + 4 H(+) = [[Fe-S] cluster scaffold protein] + N(6)-[(R)-dihydrolipoyl]-L-lysyl-[protein] + 4 Fe(3+) + 2 hydrogen sulfide + 2 5'-deoxyadenosine + 2 L-methionine + 2 reduced [2Fe-2S]-[ferredoxin]</text>
        <dbReference type="Rhea" id="RHEA:16585"/>
        <dbReference type="Rhea" id="RHEA-COMP:9928"/>
        <dbReference type="Rhea" id="RHEA-COMP:10000"/>
        <dbReference type="Rhea" id="RHEA-COMP:10001"/>
        <dbReference type="Rhea" id="RHEA-COMP:10475"/>
        <dbReference type="Rhea" id="RHEA-COMP:14568"/>
        <dbReference type="Rhea" id="RHEA-COMP:14569"/>
        <dbReference type="ChEBI" id="CHEBI:15378"/>
        <dbReference type="ChEBI" id="CHEBI:17319"/>
        <dbReference type="ChEBI" id="CHEBI:29034"/>
        <dbReference type="ChEBI" id="CHEBI:29919"/>
        <dbReference type="ChEBI" id="CHEBI:33722"/>
        <dbReference type="ChEBI" id="CHEBI:33737"/>
        <dbReference type="ChEBI" id="CHEBI:33738"/>
        <dbReference type="ChEBI" id="CHEBI:57844"/>
        <dbReference type="ChEBI" id="CHEBI:59789"/>
        <dbReference type="ChEBI" id="CHEBI:78809"/>
        <dbReference type="ChEBI" id="CHEBI:83100"/>
        <dbReference type="EC" id="2.8.1.8"/>
    </reaction>
</comment>
<comment type="cofactor">
    <cofactor evidence="1">
        <name>[4Fe-4S] cluster</name>
        <dbReference type="ChEBI" id="CHEBI:49883"/>
    </cofactor>
    <text evidence="1">Binds 2 [4Fe-4S] clusters per subunit. One cluster is coordinated with 3 cysteines and an exchangeable S-adenosyl-L-methionine.</text>
</comment>
<comment type="pathway">
    <text evidence="1">Protein modification; protein lipoylation via endogenous pathway; protein N(6)-(lipoyl)lysine from octanoyl-[acyl-carrier-protein]: step 2/2.</text>
</comment>
<comment type="subcellular location">
    <subcellularLocation>
        <location evidence="1">Cytoplasm</location>
    </subcellularLocation>
</comment>
<comment type="similarity">
    <text evidence="1">Belongs to the radical SAM superfamily. Lipoyl synthase family.</text>
</comment>
<feature type="chain" id="PRO_0000102369" description="Lipoyl synthase 1">
    <location>
        <begin position="1"/>
        <end position="289"/>
    </location>
</feature>
<feature type="domain" description="Radical SAM core" evidence="2">
    <location>
        <begin position="45"/>
        <end position="263"/>
    </location>
</feature>
<feature type="binding site" evidence="1">
    <location>
        <position position="33"/>
    </location>
    <ligand>
        <name>[4Fe-4S] cluster</name>
        <dbReference type="ChEBI" id="CHEBI:49883"/>
        <label>1</label>
    </ligand>
</feature>
<feature type="binding site" evidence="1">
    <location>
        <position position="38"/>
    </location>
    <ligand>
        <name>[4Fe-4S] cluster</name>
        <dbReference type="ChEBI" id="CHEBI:49883"/>
        <label>1</label>
    </ligand>
</feature>
<feature type="binding site" evidence="1">
    <location>
        <position position="44"/>
    </location>
    <ligand>
        <name>[4Fe-4S] cluster</name>
        <dbReference type="ChEBI" id="CHEBI:49883"/>
        <label>1</label>
    </ligand>
</feature>
<feature type="binding site" evidence="1">
    <location>
        <position position="59"/>
    </location>
    <ligand>
        <name>[4Fe-4S] cluster</name>
        <dbReference type="ChEBI" id="CHEBI:49883"/>
        <label>2</label>
        <note>4Fe-4S-S-AdoMet</note>
    </ligand>
</feature>
<feature type="binding site" evidence="1">
    <location>
        <position position="63"/>
    </location>
    <ligand>
        <name>[4Fe-4S] cluster</name>
        <dbReference type="ChEBI" id="CHEBI:49883"/>
        <label>2</label>
        <note>4Fe-4S-S-AdoMet</note>
    </ligand>
</feature>
<feature type="binding site" evidence="1">
    <location>
        <position position="66"/>
    </location>
    <ligand>
        <name>[4Fe-4S] cluster</name>
        <dbReference type="ChEBI" id="CHEBI:49883"/>
        <label>2</label>
        <note>4Fe-4S-S-AdoMet</note>
    </ligand>
</feature>
<feature type="binding site" evidence="1">
    <location>
        <position position="274"/>
    </location>
    <ligand>
        <name>[4Fe-4S] cluster</name>
        <dbReference type="ChEBI" id="CHEBI:49883"/>
        <label>1</label>
    </ligand>
</feature>
<organism>
    <name type="scientific">Parasynechococcus marenigrum (strain WH8102)</name>
    <dbReference type="NCBI Taxonomy" id="84588"/>
    <lineage>
        <taxon>Bacteria</taxon>
        <taxon>Bacillati</taxon>
        <taxon>Cyanobacteriota</taxon>
        <taxon>Cyanophyceae</taxon>
        <taxon>Synechococcales</taxon>
        <taxon>Prochlorococcaceae</taxon>
        <taxon>Parasynechococcus</taxon>
        <taxon>Parasynechococcus marenigrum</taxon>
    </lineage>
</organism>
<sequence>MLKPEWLRVKAPQRERIGAVADLLLDLNLNTVCQEASCPNIGECFAGGTATFLIMGPGCTRACPYCDIDFDKSVRELDPTEPERLGEAVARLGLKHVVITSVNRDDLPDGGATQFVACIEQVKQRSPLTTIELLIPDFCGNWDALATVMAAAPHVLNHNIETVPRMYRLARPQGIYERSLELLQRVRDDWPRAYSKSGLMVGLGETDDEVIDVLRDLRTHRVDIVTIGQYLSPGPKHLAVDRFVTPEQFDTYRRIGEEELGFLQVVSTPLTRSSYHAGEVQRLMASHPR</sequence>
<proteinExistence type="inferred from homology"/>